<protein>
    <recommendedName>
        <fullName evidence="1">Probable Fe(2+)-trafficking protein</fullName>
    </recommendedName>
</protein>
<keyword id="KW-0408">Iron</keyword>
<gene>
    <name type="ordered locus">YPTB3225</name>
</gene>
<reference key="1">
    <citation type="journal article" date="2004" name="Proc. Natl. Acad. Sci. U.S.A.">
        <title>Insights into the evolution of Yersinia pestis through whole-genome comparison with Yersinia pseudotuberculosis.</title>
        <authorList>
            <person name="Chain P.S.G."/>
            <person name="Carniel E."/>
            <person name="Larimer F.W."/>
            <person name="Lamerdin J."/>
            <person name="Stoutland P.O."/>
            <person name="Regala W.M."/>
            <person name="Georgescu A.M."/>
            <person name="Vergez L.M."/>
            <person name="Land M.L."/>
            <person name="Motin V.L."/>
            <person name="Brubaker R.R."/>
            <person name="Fowler J."/>
            <person name="Hinnebusch J."/>
            <person name="Marceau M."/>
            <person name="Medigue C."/>
            <person name="Simonet M."/>
            <person name="Chenal-Francisque V."/>
            <person name="Souza B."/>
            <person name="Dacheux D."/>
            <person name="Elliott J.M."/>
            <person name="Derbise A."/>
            <person name="Hauser L.J."/>
            <person name="Garcia E."/>
        </authorList>
    </citation>
    <scope>NUCLEOTIDE SEQUENCE [LARGE SCALE GENOMIC DNA]</scope>
    <source>
        <strain>IP32953</strain>
    </source>
</reference>
<organism>
    <name type="scientific">Yersinia pseudotuberculosis serotype I (strain IP32953)</name>
    <dbReference type="NCBI Taxonomy" id="273123"/>
    <lineage>
        <taxon>Bacteria</taxon>
        <taxon>Pseudomonadati</taxon>
        <taxon>Pseudomonadota</taxon>
        <taxon>Gammaproteobacteria</taxon>
        <taxon>Enterobacterales</taxon>
        <taxon>Yersiniaceae</taxon>
        <taxon>Yersinia</taxon>
    </lineage>
</organism>
<evidence type="ECO:0000255" key="1">
    <source>
        <dbReference type="HAMAP-Rule" id="MF_00686"/>
    </source>
</evidence>
<proteinExistence type="inferred from homology"/>
<sequence length="90" mass="10608">MSRTIFCTFLKKDAEGQDFQLYPGEIGKRIYNEISKEAWSQWITKQTMLINEKKLSMMNIEDRKLLEQEMVNFLFEGQDVHIAGYTPPSK</sequence>
<feature type="chain" id="PRO_0000214520" description="Probable Fe(2+)-trafficking protein">
    <location>
        <begin position="1"/>
        <end position="90"/>
    </location>
</feature>
<accession>Q666M3</accession>
<dbReference type="EMBL" id="BX936398">
    <property type="protein sequence ID" value="CAH22463.1"/>
    <property type="molecule type" value="Genomic_DNA"/>
</dbReference>
<dbReference type="RefSeq" id="WP_002230648.1">
    <property type="nucleotide sequence ID" value="NZ_CP009712.1"/>
</dbReference>
<dbReference type="SMR" id="Q666M3"/>
<dbReference type="KEGG" id="ypo:BZ17_3385"/>
<dbReference type="KEGG" id="yps:YPTB3225"/>
<dbReference type="PATRIC" id="fig|273123.14.peg.3552"/>
<dbReference type="Proteomes" id="UP000001011">
    <property type="component" value="Chromosome"/>
</dbReference>
<dbReference type="GO" id="GO:0005829">
    <property type="term" value="C:cytosol"/>
    <property type="evidence" value="ECO:0007669"/>
    <property type="project" value="TreeGrafter"/>
</dbReference>
<dbReference type="GO" id="GO:0005506">
    <property type="term" value="F:iron ion binding"/>
    <property type="evidence" value="ECO:0007669"/>
    <property type="project" value="UniProtKB-UniRule"/>
</dbReference>
<dbReference type="GO" id="GO:0034599">
    <property type="term" value="P:cellular response to oxidative stress"/>
    <property type="evidence" value="ECO:0007669"/>
    <property type="project" value="TreeGrafter"/>
</dbReference>
<dbReference type="FunFam" id="1.10.3880.10:FF:000001">
    <property type="entry name" value="Probable Fe(2+)-trafficking protein"/>
    <property type="match status" value="1"/>
</dbReference>
<dbReference type="Gene3D" id="1.10.3880.10">
    <property type="entry name" value="Fe(II) trafficking protein YggX"/>
    <property type="match status" value="1"/>
</dbReference>
<dbReference type="HAMAP" id="MF_00686">
    <property type="entry name" value="Fe_traffic_YggX"/>
    <property type="match status" value="1"/>
</dbReference>
<dbReference type="InterPro" id="IPR007457">
    <property type="entry name" value="Fe_traffick_prot_YggX"/>
</dbReference>
<dbReference type="InterPro" id="IPR036766">
    <property type="entry name" value="Fe_traffick_prot_YggX_sf"/>
</dbReference>
<dbReference type="NCBIfam" id="NF003817">
    <property type="entry name" value="PRK05408.1"/>
    <property type="match status" value="1"/>
</dbReference>
<dbReference type="PANTHER" id="PTHR36965">
    <property type="entry name" value="FE(2+)-TRAFFICKING PROTEIN-RELATED"/>
    <property type="match status" value="1"/>
</dbReference>
<dbReference type="PANTHER" id="PTHR36965:SF1">
    <property type="entry name" value="FE(2+)-TRAFFICKING PROTEIN-RELATED"/>
    <property type="match status" value="1"/>
</dbReference>
<dbReference type="Pfam" id="PF04362">
    <property type="entry name" value="Iron_traffic"/>
    <property type="match status" value="1"/>
</dbReference>
<dbReference type="PIRSF" id="PIRSF029827">
    <property type="entry name" value="Fe_traffic_YggX"/>
    <property type="match status" value="1"/>
</dbReference>
<dbReference type="SUPFAM" id="SSF111148">
    <property type="entry name" value="YggX-like"/>
    <property type="match status" value="1"/>
</dbReference>
<name>FETP_YERPS</name>
<comment type="function">
    <text evidence="1">Could be a mediator in iron transactions between iron acquisition and iron-requiring processes, such as synthesis and/or repair of Fe-S clusters in biosynthetic enzymes.</text>
</comment>
<comment type="subunit">
    <text evidence="1">Monomer.</text>
</comment>
<comment type="similarity">
    <text evidence="1">Belongs to the Fe(2+)-trafficking protein family.</text>
</comment>